<gene>
    <name type="ordered locus">RER_57570</name>
</gene>
<keyword id="KW-0058">Aromatic hydrocarbons catabolism</keyword>
<keyword id="KW-0520">NAD</keyword>
<keyword id="KW-0560">Oxidoreductase</keyword>
<accession>C0ZU49</accession>
<name>ACDH2_RHOE4</name>
<comment type="catalytic activity">
    <reaction evidence="1">
        <text>acetaldehyde + NAD(+) + CoA = acetyl-CoA + NADH + H(+)</text>
        <dbReference type="Rhea" id="RHEA:23288"/>
        <dbReference type="ChEBI" id="CHEBI:15343"/>
        <dbReference type="ChEBI" id="CHEBI:15378"/>
        <dbReference type="ChEBI" id="CHEBI:57287"/>
        <dbReference type="ChEBI" id="CHEBI:57288"/>
        <dbReference type="ChEBI" id="CHEBI:57540"/>
        <dbReference type="ChEBI" id="CHEBI:57945"/>
        <dbReference type="EC" id="1.2.1.10"/>
    </reaction>
</comment>
<comment type="similarity">
    <text evidence="1">Belongs to the acetaldehyde dehydrogenase family.</text>
</comment>
<dbReference type="EC" id="1.2.1.10" evidence="1"/>
<dbReference type="EMBL" id="AP008957">
    <property type="protein sequence ID" value="BAH36465.1"/>
    <property type="molecule type" value="Genomic_DNA"/>
</dbReference>
<dbReference type="RefSeq" id="WP_020909649.1">
    <property type="nucleotide sequence ID" value="NC_012490.1"/>
</dbReference>
<dbReference type="SMR" id="C0ZU49"/>
<dbReference type="KEGG" id="rer:RER_57570"/>
<dbReference type="eggNOG" id="COG4569">
    <property type="taxonomic scope" value="Bacteria"/>
</dbReference>
<dbReference type="HOGENOM" id="CLU_062208_0_0_11"/>
<dbReference type="Proteomes" id="UP000002204">
    <property type="component" value="Chromosome"/>
</dbReference>
<dbReference type="GO" id="GO:0008774">
    <property type="term" value="F:acetaldehyde dehydrogenase (acetylating) activity"/>
    <property type="evidence" value="ECO:0007669"/>
    <property type="project" value="UniProtKB-UniRule"/>
</dbReference>
<dbReference type="GO" id="GO:0051287">
    <property type="term" value="F:NAD binding"/>
    <property type="evidence" value="ECO:0007669"/>
    <property type="project" value="UniProtKB-UniRule"/>
</dbReference>
<dbReference type="GO" id="GO:0009056">
    <property type="term" value="P:catabolic process"/>
    <property type="evidence" value="ECO:0007669"/>
    <property type="project" value="UniProtKB-KW"/>
</dbReference>
<dbReference type="CDD" id="cd23933">
    <property type="entry name" value="ALDH_C"/>
    <property type="match status" value="1"/>
</dbReference>
<dbReference type="Gene3D" id="3.30.360.10">
    <property type="entry name" value="Dihydrodipicolinate Reductase, domain 2"/>
    <property type="match status" value="1"/>
</dbReference>
<dbReference type="Gene3D" id="3.40.50.720">
    <property type="entry name" value="NAD(P)-binding Rossmann-like Domain"/>
    <property type="match status" value="1"/>
</dbReference>
<dbReference type="HAMAP" id="MF_01657">
    <property type="entry name" value="Ac_ald_DH_ac"/>
    <property type="match status" value="1"/>
</dbReference>
<dbReference type="InterPro" id="IPR003361">
    <property type="entry name" value="Acetaldehyde_dehydrogenase"/>
</dbReference>
<dbReference type="InterPro" id="IPR015426">
    <property type="entry name" value="Acetylaldehyde_DH_C"/>
</dbReference>
<dbReference type="InterPro" id="IPR036291">
    <property type="entry name" value="NAD(P)-bd_dom_sf"/>
</dbReference>
<dbReference type="InterPro" id="IPR000534">
    <property type="entry name" value="Semialdehyde_DH_NAD-bd"/>
</dbReference>
<dbReference type="NCBIfam" id="TIGR03215">
    <property type="entry name" value="ac_ald_DH_ac"/>
    <property type="match status" value="1"/>
</dbReference>
<dbReference type="NCBIfam" id="NF006157">
    <property type="entry name" value="PRK08300.1"/>
    <property type="match status" value="1"/>
</dbReference>
<dbReference type="Pfam" id="PF09290">
    <property type="entry name" value="AcetDehyd-dimer"/>
    <property type="match status" value="1"/>
</dbReference>
<dbReference type="Pfam" id="PF01118">
    <property type="entry name" value="Semialdhyde_dh"/>
    <property type="match status" value="1"/>
</dbReference>
<dbReference type="PIRSF" id="PIRSF015689">
    <property type="entry name" value="Actaldh_dh_actl"/>
    <property type="match status" value="1"/>
</dbReference>
<dbReference type="SMART" id="SM00859">
    <property type="entry name" value="Semialdhyde_dh"/>
    <property type="match status" value="1"/>
</dbReference>
<dbReference type="SUPFAM" id="SSF55347">
    <property type="entry name" value="Glyceraldehyde-3-phosphate dehydrogenase-like, C-terminal domain"/>
    <property type="match status" value="1"/>
</dbReference>
<dbReference type="SUPFAM" id="SSF51735">
    <property type="entry name" value="NAD(P)-binding Rossmann-fold domains"/>
    <property type="match status" value="1"/>
</dbReference>
<reference key="1">
    <citation type="submission" date="2005-03" db="EMBL/GenBank/DDBJ databases">
        <title>Comparison of the complete genome sequences of Rhodococcus erythropolis PR4 and Rhodococcus opacus B4.</title>
        <authorList>
            <person name="Takarada H."/>
            <person name="Sekine M."/>
            <person name="Hosoyama A."/>
            <person name="Yamada R."/>
            <person name="Fujisawa T."/>
            <person name="Omata S."/>
            <person name="Shimizu A."/>
            <person name="Tsukatani N."/>
            <person name="Tanikawa S."/>
            <person name="Fujita N."/>
            <person name="Harayama S."/>
        </authorList>
    </citation>
    <scope>NUCLEOTIDE SEQUENCE [LARGE SCALE GENOMIC DNA]</scope>
    <source>
        <strain>PR4 / NBRC 100887</strain>
    </source>
</reference>
<sequence length="314" mass="33095">MSKVKVAIIGSGNIGTDLMIKVLRNSDYLEMGAMVGIDPASDGLARAARLNVPITAEGVEGLIGLPNFDEIEIVFDATSAKAHVANNARLAPLGKRMIDLTPAAIGPYVVPAVNADEHLDAPNVNMVTCGGQATIPMVAAVSRVVPVAYAEIVASIASKSAGPGTRANIDEFTETTSEAIVAVGGARRGKAIIILNPAEPPLIMRDTVFCLVDAPDPAVHEEIRQSIEKMVGDVSAYVPGYRLKQEVQITEIPADQPVETLLVDGNRPTHQVSVFLEVEGAAHYLPAYAGNLDIMTSAGMQIAERIAQQKEATK</sequence>
<feature type="chain" id="PRO_0000387719" description="Acetaldehyde dehydrogenase 2">
    <location>
        <begin position="1"/>
        <end position="314"/>
    </location>
</feature>
<feature type="active site" description="Acyl-thioester intermediate" evidence="1">
    <location>
        <position position="129"/>
    </location>
</feature>
<feature type="binding site" evidence="1">
    <location>
        <begin position="11"/>
        <end position="14"/>
    </location>
    <ligand>
        <name>NAD(+)</name>
        <dbReference type="ChEBI" id="CHEBI:57540"/>
    </ligand>
</feature>
<feature type="binding site" evidence="1">
    <location>
        <begin position="160"/>
        <end position="168"/>
    </location>
    <ligand>
        <name>NAD(+)</name>
        <dbReference type="ChEBI" id="CHEBI:57540"/>
    </ligand>
</feature>
<feature type="binding site" evidence="1">
    <location>
        <position position="291"/>
    </location>
    <ligand>
        <name>NAD(+)</name>
        <dbReference type="ChEBI" id="CHEBI:57540"/>
    </ligand>
</feature>
<organism>
    <name type="scientific">Rhodococcus erythropolis (strain PR4 / NBRC 100887)</name>
    <dbReference type="NCBI Taxonomy" id="234621"/>
    <lineage>
        <taxon>Bacteria</taxon>
        <taxon>Bacillati</taxon>
        <taxon>Actinomycetota</taxon>
        <taxon>Actinomycetes</taxon>
        <taxon>Mycobacteriales</taxon>
        <taxon>Nocardiaceae</taxon>
        <taxon>Rhodococcus</taxon>
        <taxon>Rhodococcus erythropolis group</taxon>
    </lineage>
</organism>
<proteinExistence type="inferred from homology"/>
<evidence type="ECO:0000255" key="1">
    <source>
        <dbReference type="HAMAP-Rule" id="MF_01657"/>
    </source>
</evidence>
<protein>
    <recommendedName>
        <fullName evidence="1">Acetaldehyde dehydrogenase 2</fullName>
        <ecNumber evidence="1">1.2.1.10</ecNumber>
    </recommendedName>
    <alternativeName>
        <fullName evidence="1">Acetaldehyde dehydrogenase [acetylating] 2</fullName>
    </alternativeName>
</protein>